<evidence type="ECO:0000255" key="1">
    <source>
        <dbReference type="HAMAP-Rule" id="MF_03000"/>
    </source>
</evidence>
<evidence type="ECO:0000255" key="2">
    <source>
        <dbReference type="PROSITE-ProRule" id="PRU01185"/>
    </source>
</evidence>
<evidence type="ECO:0000256" key="3">
    <source>
        <dbReference type="SAM" id="MobiDB-lite"/>
    </source>
</evidence>
<proteinExistence type="inferred from homology"/>
<feature type="chain" id="PRO_0000366352" description="Eukaryotic translation initiation factor 3 subunit A">
    <location>
        <begin position="1"/>
        <end position="1051"/>
    </location>
</feature>
<feature type="domain" description="PCI" evidence="2">
    <location>
        <begin position="339"/>
        <end position="523"/>
    </location>
</feature>
<feature type="region of interest" description="Disordered" evidence="3">
    <location>
        <begin position="617"/>
        <end position="664"/>
    </location>
</feature>
<feature type="region of interest" description="Disordered" evidence="3">
    <location>
        <begin position="794"/>
        <end position="1051"/>
    </location>
</feature>
<feature type="coiled-coil region" evidence="1">
    <location>
        <begin position="92"/>
        <end position="121"/>
    </location>
</feature>
<feature type="coiled-coil region" evidence="1">
    <location>
        <begin position="608"/>
        <end position="905"/>
    </location>
</feature>
<feature type="compositionally biased region" description="Basic and acidic residues" evidence="3">
    <location>
        <begin position="617"/>
        <end position="632"/>
    </location>
</feature>
<feature type="compositionally biased region" description="Basic and acidic residues" evidence="3">
    <location>
        <begin position="642"/>
        <end position="664"/>
    </location>
</feature>
<feature type="compositionally biased region" description="Basic and acidic residues" evidence="3">
    <location>
        <begin position="794"/>
        <end position="901"/>
    </location>
</feature>
<feature type="compositionally biased region" description="Basic and acidic residues" evidence="3">
    <location>
        <begin position="916"/>
        <end position="926"/>
    </location>
</feature>
<feature type="compositionally biased region" description="Low complexity" evidence="3">
    <location>
        <begin position="948"/>
        <end position="961"/>
    </location>
</feature>
<feature type="compositionally biased region" description="Low complexity" evidence="3">
    <location>
        <begin position="1010"/>
        <end position="1039"/>
    </location>
</feature>
<organism>
    <name type="scientific">Aspergillus fumigatus (strain CBS 144.89 / FGSC A1163 / CEA10)</name>
    <name type="common">Neosartorya fumigata</name>
    <dbReference type="NCBI Taxonomy" id="451804"/>
    <lineage>
        <taxon>Eukaryota</taxon>
        <taxon>Fungi</taxon>
        <taxon>Dikarya</taxon>
        <taxon>Ascomycota</taxon>
        <taxon>Pezizomycotina</taxon>
        <taxon>Eurotiomycetes</taxon>
        <taxon>Eurotiomycetidae</taxon>
        <taxon>Eurotiales</taxon>
        <taxon>Aspergillaceae</taxon>
        <taxon>Aspergillus</taxon>
        <taxon>Aspergillus subgen. Fumigati</taxon>
    </lineage>
</organism>
<name>EIF3A_ASPFC</name>
<reference key="1">
    <citation type="journal article" date="2008" name="PLoS Genet.">
        <title>Genomic islands in the pathogenic filamentous fungus Aspergillus fumigatus.</title>
        <authorList>
            <person name="Fedorova N.D."/>
            <person name="Khaldi N."/>
            <person name="Joardar V.S."/>
            <person name="Maiti R."/>
            <person name="Amedeo P."/>
            <person name="Anderson M.J."/>
            <person name="Crabtree J."/>
            <person name="Silva J.C."/>
            <person name="Badger J.H."/>
            <person name="Albarraq A."/>
            <person name="Angiuoli S."/>
            <person name="Bussey H."/>
            <person name="Bowyer P."/>
            <person name="Cotty P.J."/>
            <person name="Dyer P.S."/>
            <person name="Egan A."/>
            <person name="Galens K."/>
            <person name="Fraser-Liggett C.M."/>
            <person name="Haas B.J."/>
            <person name="Inman J.M."/>
            <person name="Kent R."/>
            <person name="Lemieux S."/>
            <person name="Malavazi I."/>
            <person name="Orvis J."/>
            <person name="Roemer T."/>
            <person name="Ronning C.M."/>
            <person name="Sundaram J.P."/>
            <person name="Sutton G."/>
            <person name="Turner G."/>
            <person name="Venter J.C."/>
            <person name="White O.R."/>
            <person name="Whitty B.R."/>
            <person name="Youngman P."/>
            <person name="Wolfe K.H."/>
            <person name="Goldman G.H."/>
            <person name="Wortman J.R."/>
            <person name="Jiang B."/>
            <person name="Denning D.W."/>
            <person name="Nierman W.C."/>
        </authorList>
    </citation>
    <scope>NUCLEOTIDE SEQUENCE [LARGE SCALE GENOMIC DNA]</scope>
    <source>
        <strain>CBS 144.89 / FGSC A1163 / CEA10</strain>
    </source>
</reference>
<comment type="function">
    <text evidence="1">RNA-binding component of the eukaryotic translation initiation factor 3 (eIF-3) complex, which is involved in protein synthesis of a specialized repertoire of mRNAs and, together with other initiation factors, stimulates binding of mRNA and methionyl-tRNAi to the 40S ribosome. The eIF-3 complex specifically targets and initiates translation of a subset of mRNAs involved in cell proliferation.</text>
</comment>
<comment type="subunit">
    <text evidence="1">Component of the eukaryotic translation initiation factor 3 (eIF-3) complex.</text>
</comment>
<comment type="subcellular location">
    <subcellularLocation>
        <location evidence="1">Cytoplasm</location>
    </subcellularLocation>
</comment>
<comment type="similarity">
    <text evidence="1">Belongs to the eIF-3 subunit A family.</text>
</comment>
<protein>
    <recommendedName>
        <fullName evidence="1">Eukaryotic translation initiation factor 3 subunit A</fullName>
        <shortName evidence="1">eIF3a</shortName>
    </recommendedName>
    <alternativeName>
        <fullName evidence="1">Eukaryotic translation initiation factor 3 110 kDa subunit homolog</fullName>
        <shortName evidence="1">eIF3 p110</shortName>
    </alternativeName>
    <alternativeName>
        <fullName evidence="1">Translation initiation factor eIF3, p110 subunit homolog</fullName>
    </alternativeName>
</protein>
<keyword id="KW-0175">Coiled coil</keyword>
<keyword id="KW-0963">Cytoplasm</keyword>
<keyword id="KW-0396">Initiation factor</keyword>
<keyword id="KW-0648">Protein biosynthesis</keyword>
<keyword id="KW-0694">RNA-binding</keyword>
<dbReference type="EMBL" id="DS499594">
    <property type="protein sequence ID" value="EDP55856.1"/>
    <property type="molecule type" value="Genomic_DNA"/>
</dbReference>
<dbReference type="SMR" id="B0XP13"/>
<dbReference type="EnsemblFungi" id="EDP55856">
    <property type="protein sequence ID" value="EDP55856"/>
    <property type="gene ID" value="AFUB_005560"/>
</dbReference>
<dbReference type="VEuPathDB" id="FungiDB:AFUB_005560"/>
<dbReference type="HOGENOM" id="CLU_002096_2_1_1"/>
<dbReference type="OrthoDB" id="122758at5052"/>
<dbReference type="PhylomeDB" id="B0XP13"/>
<dbReference type="Proteomes" id="UP000001699">
    <property type="component" value="Unassembled WGS sequence"/>
</dbReference>
<dbReference type="GO" id="GO:0010494">
    <property type="term" value="C:cytoplasmic stress granule"/>
    <property type="evidence" value="ECO:0007669"/>
    <property type="project" value="EnsemblFungi"/>
</dbReference>
<dbReference type="GO" id="GO:0016282">
    <property type="term" value="C:eukaryotic 43S preinitiation complex"/>
    <property type="evidence" value="ECO:0007669"/>
    <property type="project" value="UniProtKB-UniRule"/>
</dbReference>
<dbReference type="GO" id="GO:0033290">
    <property type="term" value="C:eukaryotic 48S preinitiation complex"/>
    <property type="evidence" value="ECO:0007669"/>
    <property type="project" value="UniProtKB-UniRule"/>
</dbReference>
<dbReference type="GO" id="GO:0071540">
    <property type="term" value="C:eukaryotic translation initiation factor 3 complex, eIF3e"/>
    <property type="evidence" value="ECO:0007669"/>
    <property type="project" value="EnsemblFungi"/>
</dbReference>
<dbReference type="GO" id="GO:0071541">
    <property type="term" value="C:eukaryotic translation initiation factor 3 complex, eIF3m"/>
    <property type="evidence" value="ECO:0007669"/>
    <property type="project" value="EnsemblFungi"/>
</dbReference>
<dbReference type="GO" id="GO:0043614">
    <property type="term" value="C:multi-eIF complex"/>
    <property type="evidence" value="ECO:0007669"/>
    <property type="project" value="TreeGrafter"/>
</dbReference>
<dbReference type="GO" id="GO:0003729">
    <property type="term" value="F:mRNA binding"/>
    <property type="evidence" value="ECO:0007669"/>
    <property type="project" value="TreeGrafter"/>
</dbReference>
<dbReference type="GO" id="GO:0003743">
    <property type="term" value="F:translation initiation factor activity"/>
    <property type="evidence" value="ECO:0007669"/>
    <property type="project" value="UniProtKB-UniRule"/>
</dbReference>
<dbReference type="GO" id="GO:0001732">
    <property type="term" value="P:formation of cytoplasmic translation initiation complex"/>
    <property type="evidence" value="ECO:0007669"/>
    <property type="project" value="UniProtKB-UniRule"/>
</dbReference>
<dbReference type="GO" id="GO:0002188">
    <property type="term" value="P:translation reinitiation"/>
    <property type="evidence" value="ECO:0007669"/>
    <property type="project" value="TreeGrafter"/>
</dbReference>
<dbReference type="FunFam" id="1.25.40.860:FF:000003">
    <property type="entry name" value="Eukaryotic translation initiation factor 3 subunit A"/>
    <property type="match status" value="1"/>
</dbReference>
<dbReference type="FunFam" id="1.25.40.860:FF:000005">
    <property type="entry name" value="Eukaryotic translation initiation factor 3 subunit A"/>
    <property type="match status" value="1"/>
</dbReference>
<dbReference type="FunFam" id="4.10.860.10:FF:000001">
    <property type="entry name" value="Eukaryotic translation initiation factor 3 subunit A"/>
    <property type="match status" value="1"/>
</dbReference>
<dbReference type="Gene3D" id="1.25.40.860">
    <property type="match status" value="2"/>
</dbReference>
<dbReference type="Gene3D" id="4.10.860.10">
    <property type="entry name" value="UVR domain"/>
    <property type="match status" value="1"/>
</dbReference>
<dbReference type="HAMAP" id="MF_03000">
    <property type="entry name" value="eIF3a"/>
    <property type="match status" value="1"/>
</dbReference>
<dbReference type="InterPro" id="IPR027512">
    <property type="entry name" value="EIF3A"/>
</dbReference>
<dbReference type="InterPro" id="IPR054711">
    <property type="entry name" value="eIF3a_PCI_TPR-like"/>
</dbReference>
<dbReference type="InterPro" id="IPR000717">
    <property type="entry name" value="PCI_dom"/>
</dbReference>
<dbReference type="PANTHER" id="PTHR14005:SF0">
    <property type="entry name" value="EUKARYOTIC TRANSLATION INITIATION FACTOR 3 SUBUNIT A"/>
    <property type="match status" value="1"/>
</dbReference>
<dbReference type="PANTHER" id="PTHR14005">
    <property type="entry name" value="EUKARYOTIC TRANSLATION INITIATION FACTOR 3, THETA SUBUNIT"/>
    <property type="match status" value="1"/>
</dbReference>
<dbReference type="Pfam" id="PF22591">
    <property type="entry name" value="eIF3a_PCI_TPR-like"/>
    <property type="match status" value="1"/>
</dbReference>
<dbReference type="Pfam" id="PF01399">
    <property type="entry name" value="PCI"/>
    <property type="match status" value="1"/>
</dbReference>
<dbReference type="SMART" id="SM00088">
    <property type="entry name" value="PINT"/>
    <property type="match status" value="1"/>
</dbReference>
<dbReference type="PROSITE" id="PS50250">
    <property type="entry name" value="PCI"/>
    <property type="match status" value="1"/>
</dbReference>
<sequence length="1051" mass="120229">MPPPPHIKPENVLKRAQELIAVGQAPAALNVLHEHVTSKRTRSSPIASLEPVMLLFVELCVDLRKGKAAKDGLYQYKNIAQNTNVGTIEVVLKKFIELAEKKVTEAQAKADEIQSSLESAAPSSNVEDLEAIETPETILLATVSGEQSRDRTDRAVVTPWLKFLWETYRTVLEILKNNARLEVMYQTTALQAFQFCLKYTRKTEFRRLCELLRNHVQNAAKYSAQMHAINLSDPDTLQRHLDTRFQQLNVAVELELWQEAFRSIEDIHTLLSLSKRPAKNVMMANYYEKLARIFLVSENYLFHAAAWNRYYNLLRQSAAALAAGQGTKKENPSVTEADMTKAASFVLLSALSIPVISTSRSRGALVDVDEARKNKNARLTNLLGMAQPPSRAVLFRDALNKGLLKRARPEIRDLYNILEVDFHPLSICKKITPILKQIGADPEMEKYVLPLQQVILTRLFQQLSQVYESVELKFVYELAQFPDPFQITPAMIEKFIMNGCKKGDLAIRVDHTAGVLTFDTDIFSSAKALHSGSAAGSAESEVGSVQRLQNTPAEIARLQLTRLAKTLHVTCMYVDPSYNEARIQAKKAAQARAEAGAAKEHEETLARRVLIEKKKEAATDALQRKQREEETRKRIRNQQLQEAEKQRLLDEQREREKKRLRDEQERIRQQELKKQLEELKSGVKGIDISEIDLEDLDANRLRAIKLAQLEKEKNELNERIRTTAKRIDHLERAFRREELKHIPEDYEAQKKRDMELYEAIKAETLKEAEEKHKEAVALKHRLSRLVPVFSSFRKEVSEKRHEEFEKRRKAAEREFEAKKKQRIKEVQERRRRERAEREAEERRRKEEEERAKREEEERIAKEEERRRILAEEKAKREEERKRLDEIAQRQKQREEEAEARRAARKSGLAEPPTRAAELERPVERTAPRLNLVSRTGSGPSWRERQAAKEAAGAAPAPAAAEAPKEEVQLPRRTGGYVPPHLRSGANASPATPPSNGPAPEKYVPRHMRESSSSQPPSRTQTPPAAAPASSDKPEASPAPQKWVPRWKQQQQ</sequence>
<gene>
    <name type="primary">tif32</name>
    <name type="ORF">AFUB_005560</name>
</gene>
<accession>B0XP13</accession>